<keyword id="KW-0012">Acyltransferase</keyword>
<keyword id="KW-0028">Amino-acid biosynthesis</keyword>
<keyword id="KW-0055">Arginine biosynthesis</keyword>
<keyword id="KW-0963">Cytoplasm</keyword>
<keyword id="KW-0808">Transferase</keyword>
<feature type="chain" id="PRO_1000084811" description="Amino-acid acetyltransferase">
    <location>
        <begin position="1"/>
        <end position="443"/>
    </location>
</feature>
<feature type="domain" description="N-acetyltransferase" evidence="1">
    <location>
        <begin position="296"/>
        <end position="435"/>
    </location>
</feature>
<comment type="catalytic activity">
    <reaction evidence="1">
        <text>L-glutamate + acetyl-CoA = N-acetyl-L-glutamate + CoA + H(+)</text>
        <dbReference type="Rhea" id="RHEA:24292"/>
        <dbReference type="ChEBI" id="CHEBI:15378"/>
        <dbReference type="ChEBI" id="CHEBI:29985"/>
        <dbReference type="ChEBI" id="CHEBI:44337"/>
        <dbReference type="ChEBI" id="CHEBI:57287"/>
        <dbReference type="ChEBI" id="CHEBI:57288"/>
        <dbReference type="EC" id="2.3.1.1"/>
    </reaction>
</comment>
<comment type="pathway">
    <text evidence="1">Amino-acid biosynthesis; L-arginine biosynthesis; N(2)-acetyl-L-ornithine from L-glutamate: step 1/4.</text>
</comment>
<comment type="subunit">
    <text evidence="1">Homohexamer.</text>
</comment>
<comment type="subcellular location">
    <subcellularLocation>
        <location evidence="1">Cytoplasm</location>
    </subcellularLocation>
</comment>
<comment type="similarity">
    <text evidence="1">Belongs to the acetyltransferase family. ArgA subfamily.</text>
</comment>
<dbReference type="EC" id="2.3.1.1" evidence="1"/>
<dbReference type="EMBL" id="CP000653">
    <property type="protein sequence ID" value="ABP61925.1"/>
    <property type="molecule type" value="Genomic_DNA"/>
</dbReference>
<dbReference type="RefSeq" id="WP_015960254.1">
    <property type="nucleotide sequence ID" value="NC_009436.1"/>
</dbReference>
<dbReference type="SMR" id="A4WDZ5"/>
<dbReference type="STRING" id="399742.Ent638_3261"/>
<dbReference type="GeneID" id="93306222"/>
<dbReference type="KEGG" id="ent:Ent638_3261"/>
<dbReference type="eggNOG" id="COG0548">
    <property type="taxonomic scope" value="Bacteria"/>
</dbReference>
<dbReference type="eggNOG" id="COG1246">
    <property type="taxonomic scope" value="Bacteria"/>
</dbReference>
<dbReference type="HOGENOM" id="CLU_024773_0_0_6"/>
<dbReference type="OrthoDB" id="9802238at2"/>
<dbReference type="UniPathway" id="UPA00068">
    <property type="reaction ID" value="UER00106"/>
</dbReference>
<dbReference type="Proteomes" id="UP000000230">
    <property type="component" value="Chromosome"/>
</dbReference>
<dbReference type="GO" id="GO:0005737">
    <property type="term" value="C:cytoplasm"/>
    <property type="evidence" value="ECO:0007669"/>
    <property type="project" value="UniProtKB-SubCell"/>
</dbReference>
<dbReference type="GO" id="GO:0004042">
    <property type="term" value="F:L-glutamate N-acetyltransferase activity"/>
    <property type="evidence" value="ECO:0007669"/>
    <property type="project" value="UniProtKB-UniRule"/>
</dbReference>
<dbReference type="GO" id="GO:0006526">
    <property type="term" value="P:L-arginine biosynthetic process"/>
    <property type="evidence" value="ECO:0007669"/>
    <property type="project" value="UniProtKB-UniRule"/>
</dbReference>
<dbReference type="CDD" id="cd04237">
    <property type="entry name" value="AAK_NAGS-ABP"/>
    <property type="match status" value="1"/>
</dbReference>
<dbReference type="CDD" id="cd04301">
    <property type="entry name" value="NAT_SF"/>
    <property type="match status" value="1"/>
</dbReference>
<dbReference type="FunFam" id="3.40.1160.10:FF:000005">
    <property type="entry name" value="Amino-acid acetyltransferase"/>
    <property type="match status" value="1"/>
</dbReference>
<dbReference type="FunFam" id="3.40.630.30:FF:000009">
    <property type="entry name" value="Amino-acid acetyltransferase"/>
    <property type="match status" value="1"/>
</dbReference>
<dbReference type="Gene3D" id="3.40.630.30">
    <property type="match status" value="1"/>
</dbReference>
<dbReference type="Gene3D" id="3.40.1160.10">
    <property type="entry name" value="Acetylglutamate kinase-like"/>
    <property type="match status" value="1"/>
</dbReference>
<dbReference type="HAMAP" id="MF_01105">
    <property type="entry name" value="N_acetyl_glu_synth"/>
    <property type="match status" value="1"/>
</dbReference>
<dbReference type="InterPro" id="IPR036393">
    <property type="entry name" value="AceGlu_kinase-like_sf"/>
</dbReference>
<dbReference type="InterPro" id="IPR016181">
    <property type="entry name" value="Acyl_CoA_acyltransferase"/>
</dbReference>
<dbReference type="InterPro" id="IPR001048">
    <property type="entry name" value="Asp/Glu/Uridylate_kinase"/>
</dbReference>
<dbReference type="InterPro" id="IPR000182">
    <property type="entry name" value="GNAT_dom"/>
</dbReference>
<dbReference type="InterPro" id="IPR033719">
    <property type="entry name" value="NAGS_kin"/>
</dbReference>
<dbReference type="InterPro" id="IPR010167">
    <property type="entry name" value="NH2A_AcTrfase"/>
</dbReference>
<dbReference type="NCBIfam" id="TIGR01890">
    <property type="entry name" value="N-Ac-Glu-synth"/>
    <property type="match status" value="1"/>
</dbReference>
<dbReference type="NCBIfam" id="NF003641">
    <property type="entry name" value="PRK05279.1"/>
    <property type="match status" value="1"/>
</dbReference>
<dbReference type="PANTHER" id="PTHR30602">
    <property type="entry name" value="AMINO-ACID ACETYLTRANSFERASE"/>
    <property type="match status" value="1"/>
</dbReference>
<dbReference type="PANTHER" id="PTHR30602:SF12">
    <property type="entry name" value="AMINO-ACID ACETYLTRANSFERASE NAGS1, CHLOROPLASTIC-RELATED"/>
    <property type="match status" value="1"/>
</dbReference>
<dbReference type="Pfam" id="PF00696">
    <property type="entry name" value="AA_kinase"/>
    <property type="match status" value="1"/>
</dbReference>
<dbReference type="Pfam" id="PF00583">
    <property type="entry name" value="Acetyltransf_1"/>
    <property type="match status" value="1"/>
</dbReference>
<dbReference type="PIRSF" id="PIRSF000423">
    <property type="entry name" value="ArgA"/>
    <property type="match status" value="1"/>
</dbReference>
<dbReference type="SUPFAM" id="SSF55729">
    <property type="entry name" value="Acyl-CoA N-acyltransferases (Nat)"/>
    <property type="match status" value="1"/>
</dbReference>
<dbReference type="SUPFAM" id="SSF53633">
    <property type="entry name" value="Carbamate kinase-like"/>
    <property type="match status" value="1"/>
</dbReference>
<dbReference type="PROSITE" id="PS51186">
    <property type="entry name" value="GNAT"/>
    <property type="match status" value="1"/>
</dbReference>
<accession>A4WDZ5</accession>
<evidence type="ECO:0000255" key="1">
    <source>
        <dbReference type="HAMAP-Rule" id="MF_01105"/>
    </source>
</evidence>
<sequence>MVKERRTELVQGFRHSVPYINTHRGKTFVIMLGGEAIEHENFSSIVNDIGLLHSLGIRLVVVYGARPQIDANLAAHHHEPIYHKHTRVTDAKTLELVKQAAGLLQLDITARLSMSLNNTPLQGAHINVVSGNFIISQPLGVDDGVDYCHSGRIRRIDEEAIHRQLDSGAIVLMGPVAVSVTGESFNLTSEEVATQLAIKLKAEKMIGFCSSQGVFDEQGNIVSELFPNEAQARVETLEAEGDYHSGTVRFLRGAVKACRSGVRRSHLISYQEDGALLQELFSRDGIGTQIVMESAEQIRRATINDIGGILELIRPLEQQGILVRRSREQLEMEIDKFTIIQRDNLTIACAALYPFPEEKIGEMACVAVHPDYRSSSRGEVLLERVAAQARQIGLSKLFVLTTRSIHWFQERGFTPVDIDSLPESKKEMYNYQRRSKVLMADLG</sequence>
<reference key="1">
    <citation type="journal article" date="2010" name="PLoS Genet.">
        <title>Genome sequence of the plant growth promoting endophytic bacterium Enterobacter sp. 638.</title>
        <authorList>
            <person name="Taghavi S."/>
            <person name="van der Lelie D."/>
            <person name="Hoffman A."/>
            <person name="Zhang Y.B."/>
            <person name="Walla M.D."/>
            <person name="Vangronsveld J."/>
            <person name="Newman L."/>
            <person name="Monchy S."/>
        </authorList>
    </citation>
    <scope>NUCLEOTIDE SEQUENCE [LARGE SCALE GENOMIC DNA]</scope>
    <source>
        <strain>638</strain>
    </source>
</reference>
<gene>
    <name evidence="1" type="primary">argA</name>
    <name type="ordered locus">Ent638_3261</name>
</gene>
<protein>
    <recommendedName>
        <fullName evidence="1">Amino-acid acetyltransferase</fullName>
        <ecNumber evidence="1">2.3.1.1</ecNumber>
    </recommendedName>
    <alternativeName>
        <fullName evidence="1">N-acetylglutamate synthase</fullName>
        <shortName evidence="1">AGS</shortName>
        <shortName evidence="1">NAGS</shortName>
    </alternativeName>
</protein>
<proteinExistence type="inferred from homology"/>
<organism>
    <name type="scientific">Enterobacter sp. (strain 638)</name>
    <dbReference type="NCBI Taxonomy" id="399742"/>
    <lineage>
        <taxon>Bacteria</taxon>
        <taxon>Pseudomonadati</taxon>
        <taxon>Pseudomonadota</taxon>
        <taxon>Gammaproteobacteria</taxon>
        <taxon>Enterobacterales</taxon>
        <taxon>Enterobacteriaceae</taxon>
        <taxon>Enterobacter</taxon>
    </lineage>
</organism>
<name>ARGA_ENT38</name>